<protein>
    <recommendedName>
        <fullName evidence="1">Pyrroline-5-carboxylate reductase 1</fullName>
        <shortName evidence="1">P5C reductase 1</shortName>
        <shortName evidence="1">P5CR 1</shortName>
        <ecNumber evidence="1">1.5.1.2</ecNumber>
    </recommendedName>
    <alternativeName>
        <fullName evidence="1">PCA reductase 1</fullName>
    </alternativeName>
</protein>
<dbReference type="EC" id="1.5.1.2" evidence="1"/>
<dbReference type="EMBL" id="CP002183">
    <property type="protein sequence ID" value="ADM38011.1"/>
    <property type="status" value="ALT_INIT"/>
    <property type="molecule type" value="Genomic_DNA"/>
</dbReference>
<dbReference type="EMBL" id="M24523">
    <property type="protein sequence ID" value="AAA22722.1"/>
    <property type="molecule type" value="Genomic_DNA"/>
</dbReference>
<dbReference type="PIR" id="E69682">
    <property type="entry name" value="E69682"/>
</dbReference>
<dbReference type="SMR" id="E0TY11"/>
<dbReference type="KEGG" id="bss:BSUW23_09835"/>
<dbReference type="HOGENOM" id="CLU_042344_0_1_9"/>
<dbReference type="UniPathway" id="UPA00098">
    <property type="reaction ID" value="UER00361"/>
</dbReference>
<dbReference type="Proteomes" id="UP000002233">
    <property type="component" value="Chromosome"/>
</dbReference>
<dbReference type="GO" id="GO:0005737">
    <property type="term" value="C:cytoplasm"/>
    <property type="evidence" value="ECO:0007669"/>
    <property type="project" value="UniProtKB-SubCell"/>
</dbReference>
<dbReference type="GO" id="GO:0004735">
    <property type="term" value="F:pyrroline-5-carboxylate reductase activity"/>
    <property type="evidence" value="ECO:0007669"/>
    <property type="project" value="UniProtKB-UniRule"/>
</dbReference>
<dbReference type="GO" id="GO:0055129">
    <property type="term" value="P:L-proline biosynthetic process"/>
    <property type="evidence" value="ECO:0007669"/>
    <property type="project" value="UniProtKB-UniRule"/>
</dbReference>
<dbReference type="FunFam" id="1.10.3730.10:FF:000001">
    <property type="entry name" value="Pyrroline-5-carboxylate reductase"/>
    <property type="match status" value="1"/>
</dbReference>
<dbReference type="Gene3D" id="3.40.50.720">
    <property type="entry name" value="NAD(P)-binding Rossmann-like Domain"/>
    <property type="match status" value="1"/>
</dbReference>
<dbReference type="Gene3D" id="1.10.3730.10">
    <property type="entry name" value="ProC C-terminal domain-like"/>
    <property type="match status" value="1"/>
</dbReference>
<dbReference type="HAMAP" id="MF_01925">
    <property type="entry name" value="P5C_reductase"/>
    <property type="match status" value="1"/>
</dbReference>
<dbReference type="InterPro" id="IPR008927">
    <property type="entry name" value="6-PGluconate_DH-like_C_sf"/>
</dbReference>
<dbReference type="InterPro" id="IPR036291">
    <property type="entry name" value="NAD(P)-bd_dom_sf"/>
</dbReference>
<dbReference type="InterPro" id="IPR028939">
    <property type="entry name" value="P5C_Rdtase_cat_N"/>
</dbReference>
<dbReference type="InterPro" id="IPR053790">
    <property type="entry name" value="P5CR-like_CS"/>
</dbReference>
<dbReference type="InterPro" id="IPR029036">
    <property type="entry name" value="P5CR_dimer"/>
</dbReference>
<dbReference type="InterPro" id="IPR000304">
    <property type="entry name" value="Pyrroline-COOH_reductase"/>
</dbReference>
<dbReference type="NCBIfam" id="TIGR00112">
    <property type="entry name" value="proC"/>
    <property type="match status" value="1"/>
</dbReference>
<dbReference type="PANTHER" id="PTHR11645">
    <property type="entry name" value="PYRROLINE-5-CARBOXYLATE REDUCTASE"/>
    <property type="match status" value="1"/>
</dbReference>
<dbReference type="PANTHER" id="PTHR11645:SF49">
    <property type="entry name" value="PYRROLINE-5-CARBOXYLATE REDUCTASE 1"/>
    <property type="match status" value="1"/>
</dbReference>
<dbReference type="Pfam" id="PF03807">
    <property type="entry name" value="F420_oxidored"/>
    <property type="match status" value="1"/>
</dbReference>
<dbReference type="Pfam" id="PF14748">
    <property type="entry name" value="P5CR_dimer"/>
    <property type="match status" value="1"/>
</dbReference>
<dbReference type="PIRSF" id="PIRSF000193">
    <property type="entry name" value="Pyrrol-5-carb_rd"/>
    <property type="match status" value="1"/>
</dbReference>
<dbReference type="SUPFAM" id="SSF48179">
    <property type="entry name" value="6-phosphogluconate dehydrogenase C-terminal domain-like"/>
    <property type="match status" value="1"/>
</dbReference>
<dbReference type="SUPFAM" id="SSF51735">
    <property type="entry name" value="NAD(P)-binding Rossmann-fold domains"/>
    <property type="match status" value="1"/>
</dbReference>
<dbReference type="PROSITE" id="PS00521">
    <property type="entry name" value="P5CR"/>
    <property type="match status" value="1"/>
</dbReference>
<feature type="chain" id="PRO_0000403662" description="Pyrroline-5-carboxylate reductase 1">
    <location>
        <begin position="1"/>
        <end position="297"/>
    </location>
</feature>
<keyword id="KW-0028">Amino-acid biosynthesis</keyword>
<keyword id="KW-0963">Cytoplasm</keyword>
<keyword id="KW-0521">NADP</keyword>
<keyword id="KW-0560">Oxidoreductase</keyword>
<keyword id="KW-0641">Proline biosynthesis</keyword>
<reference key="1">
    <citation type="journal article" date="2011" name="Microbiology">
        <title>The genome sequence of Bacillus subtilis subsp. spizizenii W23: insights into speciation within the B. subtilis complex and into the history of B. subtilis genetics.</title>
        <authorList>
            <person name="Zeigler D.R."/>
        </authorList>
    </citation>
    <scope>NUCLEOTIDE SEQUENCE [LARGE SCALE GENOMIC DNA]</scope>
    <source>
        <strain>ATCC 23059 / NRRL B-14472 / W23</strain>
    </source>
</reference>
<reference key="2">
    <citation type="journal article" date="1991" name="Gene">
        <title>Variations and coding features of the sequence spanning the replication terminus of Bacillus subtilis 168 and W23 chromosomes.</title>
        <authorList>
            <person name="Ahn K.S."/>
            <person name="Wake R.G."/>
        </authorList>
    </citation>
    <scope>NUCLEOTIDE SEQUENCE [GENOMIC DNA] OF 1-257</scope>
    <source>
        <strain>ATCC 23059 / NRRL B-14472 / W23</strain>
    </source>
</reference>
<reference key="3">
    <citation type="journal article" date="1989" name="J. Bacteriol.">
        <title>DNA and protein sequence conservation at the replication terminus in Bacillus subtilis 168 and W23.</title>
        <authorList>
            <person name="Lewis P.J."/>
            <person name="Wake R.G."/>
        </authorList>
    </citation>
    <scope>NUCLEOTIDE SEQUENCE [GENOMIC DNA] OF 1-200</scope>
    <source>
        <strain>ATCC 23059 / NRRL B-14472 / W23</strain>
    </source>
</reference>
<evidence type="ECO:0000255" key="1">
    <source>
        <dbReference type="HAMAP-Rule" id="MF_01925"/>
    </source>
</evidence>
<evidence type="ECO:0000305" key="2"/>
<comment type="function">
    <text evidence="1">Catalyzes the reduction of 1-pyrroline-5-carboxylate (PCA) to L-proline.</text>
</comment>
<comment type="catalytic activity">
    <reaction evidence="1">
        <text>L-proline + NADP(+) = (S)-1-pyrroline-5-carboxylate + NADPH + 2 H(+)</text>
        <dbReference type="Rhea" id="RHEA:14109"/>
        <dbReference type="ChEBI" id="CHEBI:15378"/>
        <dbReference type="ChEBI" id="CHEBI:17388"/>
        <dbReference type="ChEBI" id="CHEBI:57783"/>
        <dbReference type="ChEBI" id="CHEBI:58349"/>
        <dbReference type="ChEBI" id="CHEBI:60039"/>
        <dbReference type="EC" id="1.5.1.2"/>
    </reaction>
</comment>
<comment type="catalytic activity">
    <reaction evidence="1">
        <text>L-proline + NAD(+) = (S)-1-pyrroline-5-carboxylate + NADH + 2 H(+)</text>
        <dbReference type="Rhea" id="RHEA:14105"/>
        <dbReference type="ChEBI" id="CHEBI:15378"/>
        <dbReference type="ChEBI" id="CHEBI:17388"/>
        <dbReference type="ChEBI" id="CHEBI:57540"/>
        <dbReference type="ChEBI" id="CHEBI:57945"/>
        <dbReference type="ChEBI" id="CHEBI:60039"/>
        <dbReference type="EC" id="1.5.1.2"/>
    </reaction>
</comment>
<comment type="pathway">
    <text evidence="1">Amino-acid biosynthesis; L-proline biosynthesis; L-proline from L-glutamate 5-semialdehyde: step 1/1.</text>
</comment>
<comment type="subcellular location">
    <subcellularLocation>
        <location evidence="1">Cytoplasm</location>
    </subcellularLocation>
</comment>
<comment type="similarity">
    <text evidence="1">Belongs to the pyrroline-5-carboxylate reductase family.</text>
</comment>
<comment type="sequence caution" evidence="2">
    <conflict type="erroneous initiation">
        <sequence resource="EMBL-CDS" id="ADM38011"/>
    </conflict>
    <text>Truncated N-terminus.</text>
</comment>
<proteinExistence type="inferred from homology"/>
<organism>
    <name type="scientific">Bacillus spizizenii (strain ATCC 23059 / NRRL B-14472 / W23)</name>
    <name type="common">Bacillus subtilis subsp. spizizenii</name>
    <dbReference type="NCBI Taxonomy" id="655816"/>
    <lineage>
        <taxon>Bacteria</taxon>
        <taxon>Bacillati</taxon>
        <taxon>Bacillota</taxon>
        <taxon>Bacilli</taxon>
        <taxon>Bacillales</taxon>
        <taxon>Bacillaceae</taxon>
        <taxon>Bacillus</taxon>
    </lineage>
</organism>
<accession>E0TY11</accession>
<accession>O07508</accession>
<accession>O31828</accession>
<accession>P14383</accession>
<gene>
    <name type="primary">proH</name>
    <name type="ordered locus">BSUW23_09835</name>
</gene>
<name>P5CR1_BACSH</name>
<sequence>MRTKKRTKEMLPIFDQKKVAFIGAGSMAEGMISGIVRANKIPKQNICVTNRSNTERLAELELQYGIKGASPNQICIEDMDVLILAMKPKDAESALSSLKTRIQPHQLILSVLAGITTSFIEQSLLNQQPVVRVMPNTSSMIGASATAIALGKYVSEDLQKLAEALLGCMGEVYTIQENQMDIFTGIAGSGPAYFYYLMEFIEKTGEEAGLDKQLSRSIGAQTLLGAAKMLMETGEQPEVLRDNITSPNGTTAAGLQALKKSGGGEAISQAIKHAAKRSKEISDDIEKTAAPLSGVIK</sequence>